<protein>
    <recommendedName>
        <fullName evidence="1">Beta-ketoacyl-[acyl-carrier-protein] synthase III</fullName>
        <shortName evidence="1">Beta-ketoacyl-ACP synthase III</shortName>
        <shortName evidence="1">KAS III</shortName>
        <ecNumber evidence="1">2.3.1.180</ecNumber>
    </recommendedName>
    <alternativeName>
        <fullName evidence="1">3-oxoacyl-[acyl-carrier-protein] synthase 3</fullName>
    </alternativeName>
    <alternativeName>
        <fullName evidence="1">3-oxoacyl-[acyl-carrier-protein] synthase III</fullName>
    </alternativeName>
</protein>
<organism>
    <name type="scientific">Escherichia coli (strain ATCC 8739 / DSM 1576 / NBRC 3972 / NCIMB 8545 / WDCM 00012 / Crooks)</name>
    <dbReference type="NCBI Taxonomy" id="481805"/>
    <lineage>
        <taxon>Bacteria</taxon>
        <taxon>Pseudomonadati</taxon>
        <taxon>Pseudomonadota</taxon>
        <taxon>Gammaproteobacteria</taxon>
        <taxon>Enterobacterales</taxon>
        <taxon>Enterobacteriaceae</taxon>
        <taxon>Escherichia</taxon>
    </lineage>
</organism>
<reference key="1">
    <citation type="submission" date="2008-02" db="EMBL/GenBank/DDBJ databases">
        <title>Complete sequence of Escherichia coli C str. ATCC 8739.</title>
        <authorList>
            <person name="Copeland A."/>
            <person name="Lucas S."/>
            <person name="Lapidus A."/>
            <person name="Glavina del Rio T."/>
            <person name="Dalin E."/>
            <person name="Tice H."/>
            <person name="Bruce D."/>
            <person name="Goodwin L."/>
            <person name="Pitluck S."/>
            <person name="Kiss H."/>
            <person name="Brettin T."/>
            <person name="Detter J.C."/>
            <person name="Han C."/>
            <person name="Kuske C.R."/>
            <person name="Schmutz J."/>
            <person name="Larimer F."/>
            <person name="Land M."/>
            <person name="Hauser L."/>
            <person name="Kyrpides N."/>
            <person name="Mikhailova N."/>
            <person name="Ingram L."/>
            <person name="Richardson P."/>
        </authorList>
    </citation>
    <scope>NUCLEOTIDE SEQUENCE [LARGE SCALE GENOMIC DNA]</scope>
    <source>
        <strain>ATCC 8739 / DSM 1576 / NBRC 3972 / NCIMB 8545 / WDCM 00012 / Crooks</strain>
    </source>
</reference>
<evidence type="ECO:0000255" key="1">
    <source>
        <dbReference type="HAMAP-Rule" id="MF_01815"/>
    </source>
</evidence>
<name>FABH_ECOLC</name>
<comment type="function">
    <text evidence="1">Catalyzes the condensation reaction of fatty acid synthesis by the addition to an acyl acceptor of two carbons from malonyl-ACP. Catalyzes the first condensation reaction which initiates fatty acid synthesis and may therefore play a role in governing the total rate of fatty acid production. Possesses both acetoacetyl-ACP synthase and acetyl transacylase activities. Its substrate specificity determines the biosynthesis of branched-chain and/or straight-chain of fatty acids.</text>
</comment>
<comment type="catalytic activity">
    <reaction evidence="1">
        <text>malonyl-[ACP] + acetyl-CoA + H(+) = 3-oxobutanoyl-[ACP] + CO2 + CoA</text>
        <dbReference type="Rhea" id="RHEA:12080"/>
        <dbReference type="Rhea" id="RHEA-COMP:9623"/>
        <dbReference type="Rhea" id="RHEA-COMP:9625"/>
        <dbReference type="ChEBI" id="CHEBI:15378"/>
        <dbReference type="ChEBI" id="CHEBI:16526"/>
        <dbReference type="ChEBI" id="CHEBI:57287"/>
        <dbReference type="ChEBI" id="CHEBI:57288"/>
        <dbReference type="ChEBI" id="CHEBI:78449"/>
        <dbReference type="ChEBI" id="CHEBI:78450"/>
        <dbReference type="EC" id="2.3.1.180"/>
    </reaction>
</comment>
<comment type="pathway">
    <text evidence="1">Lipid metabolism; fatty acid biosynthesis.</text>
</comment>
<comment type="subunit">
    <text evidence="1">Homodimer.</text>
</comment>
<comment type="subcellular location">
    <subcellularLocation>
        <location evidence="1">Cytoplasm</location>
    </subcellularLocation>
</comment>
<comment type="domain">
    <text evidence="1">The last Arg residue of the ACP-binding site is essential for the weak association between ACP/AcpP and FabH.</text>
</comment>
<comment type="similarity">
    <text evidence="1">Belongs to the thiolase-like superfamily. FabH family.</text>
</comment>
<feature type="chain" id="PRO_1000088312" description="Beta-ketoacyl-[acyl-carrier-protein] synthase III">
    <location>
        <begin position="1"/>
        <end position="317"/>
    </location>
</feature>
<feature type="region of interest" description="ACP-binding" evidence="1">
    <location>
        <begin position="245"/>
        <end position="249"/>
    </location>
</feature>
<feature type="active site" evidence="1">
    <location>
        <position position="112"/>
    </location>
</feature>
<feature type="active site" evidence="1">
    <location>
        <position position="244"/>
    </location>
</feature>
<feature type="active site" evidence="1">
    <location>
        <position position="274"/>
    </location>
</feature>
<dbReference type="EC" id="2.3.1.180" evidence="1"/>
<dbReference type="EMBL" id="CP000946">
    <property type="protein sequence ID" value="ACA78141.1"/>
    <property type="molecule type" value="Genomic_DNA"/>
</dbReference>
<dbReference type="RefSeq" id="WP_000288146.1">
    <property type="nucleotide sequence ID" value="NZ_MTFT01000032.1"/>
</dbReference>
<dbReference type="SMR" id="B1IUH4"/>
<dbReference type="KEGG" id="ecl:EcolC_2510"/>
<dbReference type="HOGENOM" id="CLU_039592_4_1_6"/>
<dbReference type="UniPathway" id="UPA00094"/>
<dbReference type="GO" id="GO:0005737">
    <property type="term" value="C:cytoplasm"/>
    <property type="evidence" value="ECO:0007669"/>
    <property type="project" value="UniProtKB-SubCell"/>
</dbReference>
<dbReference type="GO" id="GO:0004315">
    <property type="term" value="F:3-oxoacyl-[acyl-carrier-protein] synthase activity"/>
    <property type="evidence" value="ECO:0007669"/>
    <property type="project" value="InterPro"/>
</dbReference>
<dbReference type="GO" id="GO:0033818">
    <property type="term" value="F:beta-ketoacyl-acyl-carrier-protein synthase III activity"/>
    <property type="evidence" value="ECO:0007669"/>
    <property type="project" value="UniProtKB-UniRule"/>
</dbReference>
<dbReference type="GO" id="GO:0006633">
    <property type="term" value="P:fatty acid biosynthetic process"/>
    <property type="evidence" value="ECO:0007669"/>
    <property type="project" value="UniProtKB-UniRule"/>
</dbReference>
<dbReference type="CDD" id="cd00830">
    <property type="entry name" value="KAS_III"/>
    <property type="match status" value="1"/>
</dbReference>
<dbReference type="FunFam" id="3.40.47.10:FF:000004">
    <property type="entry name" value="3-oxoacyl-[acyl-carrier-protein] synthase 3"/>
    <property type="match status" value="1"/>
</dbReference>
<dbReference type="Gene3D" id="3.40.47.10">
    <property type="match status" value="1"/>
</dbReference>
<dbReference type="HAMAP" id="MF_01815">
    <property type="entry name" value="FabH"/>
    <property type="match status" value="1"/>
</dbReference>
<dbReference type="InterPro" id="IPR013747">
    <property type="entry name" value="ACP_syn_III_C"/>
</dbReference>
<dbReference type="InterPro" id="IPR013751">
    <property type="entry name" value="ACP_syn_III_N"/>
</dbReference>
<dbReference type="InterPro" id="IPR004655">
    <property type="entry name" value="FabH"/>
</dbReference>
<dbReference type="InterPro" id="IPR016039">
    <property type="entry name" value="Thiolase-like"/>
</dbReference>
<dbReference type="NCBIfam" id="TIGR00747">
    <property type="entry name" value="fabH"/>
    <property type="match status" value="1"/>
</dbReference>
<dbReference type="NCBIfam" id="NF006829">
    <property type="entry name" value="PRK09352.1"/>
    <property type="match status" value="1"/>
</dbReference>
<dbReference type="PANTHER" id="PTHR43091">
    <property type="entry name" value="3-OXOACYL-[ACYL-CARRIER-PROTEIN] SYNTHASE"/>
    <property type="match status" value="1"/>
</dbReference>
<dbReference type="PANTHER" id="PTHR43091:SF1">
    <property type="entry name" value="BETA-KETOACYL-[ACYL-CARRIER-PROTEIN] SYNTHASE III, CHLOROPLASTIC"/>
    <property type="match status" value="1"/>
</dbReference>
<dbReference type="Pfam" id="PF08545">
    <property type="entry name" value="ACP_syn_III"/>
    <property type="match status" value="1"/>
</dbReference>
<dbReference type="Pfam" id="PF08541">
    <property type="entry name" value="ACP_syn_III_C"/>
    <property type="match status" value="1"/>
</dbReference>
<dbReference type="SUPFAM" id="SSF53901">
    <property type="entry name" value="Thiolase-like"/>
    <property type="match status" value="1"/>
</dbReference>
<keyword id="KW-0012">Acyltransferase</keyword>
<keyword id="KW-0963">Cytoplasm</keyword>
<keyword id="KW-0275">Fatty acid biosynthesis</keyword>
<keyword id="KW-0276">Fatty acid metabolism</keyword>
<keyword id="KW-0444">Lipid biosynthesis</keyword>
<keyword id="KW-0443">Lipid metabolism</keyword>
<keyword id="KW-0511">Multifunctional enzyme</keyword>
<keyword id="KW-0808">Transferase</keyword>
<sequence length="317" mass="33546">MYTKIIGTGSYLPEQVRTNADLEKMVDTSDEWIVTRTGIRERHIAAQNETVSTMGFEAATRAIEMAGIEKDQIGLIVVATTSATHAFPSAACQIQSMLGIKGCPAFDVAAACAGFTYALSVADQYVKSGAVKYALVVGSDVLARTCDPTDRGTIIIFGDGAGAAVLAASEEPGIISTHLHADGSYGELLTLPNADRVNPENSIHLTMAGNEVFKVAVTELAHIVDETLAANNLDRSQLDWLVPHQANLRIISATAKKLGMSMDNVVVTLDRHGNTSAASVPCALDEAVRDGRIKPGQLVLLEAFGGGFTWGSALVRF</sequence>
<gene>
    <name evidence="1" type="primary">fabH</name>
    <name type="ordered locus">EcolC_2510</name>
</gene>
<accession>B1IUH4</accession>
<proteinExistence type="inferred from homology"/>